<accession>A8ACA7</accession>
<evidence type="ECO:0000255" key="1">
    <source>
        <dbReference type="HAMAP-Rule" id="MF_00054"/>
    </source>
</evidence>
<feature type="chain" id="PRO_1000008833" description="Elongation factor 2">
    <location>
        <begin position="1"/>
        <end position="740"/>
    </location>
</feature>
<feature type="domain" description="tr-type G">
    <location>
        <begin position="18"/>
        <end position="263"/>
    </location>
</feature>
<feature type="binding site" evidence="1">
    <location>
        <begin position="27"/>
        <end position="34"/>
    </location>
    <ligand>
        <name>GTP</name>
        <dbReference type="ChEBI" id="CHEBI:37565"/>
    </ligand>
</feature>
<feature type="binding site" evidence="1">
    <location>
        <begin position="93"/>
        <end position="97"/>
    </location>
    <ligand>
        <name>GTP</name>
        <dbReference type="ChEBI" id="CHEBI:37565"/>
    </ligand>
</feature>
<feature type="binding site" evidence="1">
    <location>
        <begin position="147"/>
        <end position="150"/>
    </location>
    <ligand>
        <name>GTP</name>
        <dbReference type="ChEBI" id="CHEBI:37565"/>
    </ligand>
</feature>
<feature type="modified residue" description="Diphthamide" evidence="1">
    <location>
        <position position="606"/>
    </location>
</feature>
<name>EF2_IGNH4</name>
<organism>
    <name type="scientific">Ignicoccus hospitalis (strain KIN4/I / DSM 18386 / JCM 14125)</name>
    <dbReference type="NCBI Taxonomy" id="453591"/>
    <lineage>
        <taxon>Archaea</taxon>
        <taxon>Thermoproteota</taxon>
        <taxon>Thermoprotei</taxon>
        <taxon>Desulfurococcales</taxon>
        <taxon>Desulfurococcaceae</taxon>
        <taxon>Ignicoccus</taxon>
    </lineage>
</organism>
<keyword id="KW-0963">Cytoplasm</keyword>
<keyword id="KW-0251">Elongation factor</keyword>
<keyword id="KW-0342">GTP-binding</keyword>
<keyword id="KW-0547">Nucleotide-binding</keyword>
<keyword id="KW-0648">Protein biosynthesis</keyword>
<keyword id="KW-1185">Reference proteome</keyword>
<proteinExistence type="inferred from homology"/>
<comment type="function">
    <text evidence="1">Catalyzes the GTP-dependent ribosomal translocation step during translation elongation. During this step, the ribosome changes from the pre-translocational (PRE) to the post-translocational (POST) state as the newly formed A-site-bound peptidyl-tRNA and P-site-bound deacylated tRNA move to the P and E sites, respectively. Catalyzes the coordinated movement of the two tRNA molecules, the mRNA and conformational changes in the ribosome.</text>
</comment>
<comment type="subcellular location">
    <subcellularLocation>
        <location evidence="1">Cytoplasm</location>
    </subcellularLocation>
</comment>
<comment type="similarity">
    <text evidence="1">Belongs to the TRAFAC class translation factor GTPase superfamily. Classic translation factor GTPase family. EF-G/EF-2 subfamily.</text>
</comment>
<reference key="1">
    <citation type="journal article" date="2008" name="Genome Biol.">
        <title>A genomic analysis of the archaeal system Ignicoccus hospitalis-Nanoarchaeum equitans.</title>
        <authorList>
            <person name="Podar M."/>
            <person name="Anderson I."/>
            <person name="Makarova K.S."/>
            <person name="Elkins J.G."/>
            <person name="Ivanova N."/>
            <person name="Wall M.A."/>
            <person name="Lykidis A."/>
            <person name="Mavromatis K."/>
            <person name="Sun H."/>
            <person name="Hudson M.E."/>
            <person name="Chen W."/>
            <person name="Deciu C."/>
            <person name="Hutchison D."/>
            <person name="Eads J.R."/>
            <person name="Anderson A."/>
            <person name="Fernandes F."/>
            <person name="Szeto E."/>
            <person name="Lapidus A."/>
            <person name="Kyrpides N.C."/>
            <person name="Saier M.H. Jr."/>
            <person name="Richardson P.M."/>
            <person name="Rachel R."/>
            <person name="Huber H."/>
            <person name="Eisen J.A."/>
            <person name="Koonin E.V."/>
            <person name="Keller M."/>
            <person name="Stetter K.O."/>
        </authorList>
    </citation>
    <scope>NUCLEOTIDE SEQUENCE [LARGE SCALE GENOMIC DNA]</scope>
    <source>
        <strain>KIN4/I / DSM 18386 / JCM 14125</strain>
    </source>
</reference>
<sequence>MPKYKHVEDILKIMRNVEQVRNIGIIAHVDHGKTTTSDALLAHAGILSPKLAGEARALDYLDVEQQRGITVKAANVSLYHEYKGKPYVINLIDTPGHVDFSGKVTRSLRVLDGAILVVDAVEGVMTQTETVLRQALEELVRPLLFINKVDRLIKELKLSPQEIQQRIVQIIKDVNERILTFAPDPEIAKKWLLDPAKGHVALGSAKDKWGITIPMAQEKGIKFSDIVEAYAKGSKDAIEELFHKAPLHETLLDMVVRWVPNPREAQKYRVPRLWKGDINSELGKAMLNCDPEGPLVVFINDMRLDPHTKRLVATGRVWAGTATAGKEVWLVNAQKPGKILQVSIYMGPDREIVDYVTAGNIVAMLGLDDARAGETLVDINYKDQAAPFEQLHYVSEPVVTVAIEPKNPRDLPKLIEALRTLSIEDPNLKVTINQETGEYLLSGMGMLHIEIALTQLKEVYGLEVKVSPPVITYRETVRKPGEKVEGKSPNKHNKLYITVEPLEKEVIEMIQKGEITDDQDPRERAKVLRDKVNWDADTARRIWAVDEENFNIFIDKTVGVQHLREVKDTILAGWRLAMKEGPLAKEPVRGVKVILWDAVIHEDPAHRGPAQLYPAVRNAVYASMLTDSPTLLEPWQKLDIRVPNEYIGAVTGVITKHRGKILEVIDMGGQARIVAAVPIAESFELPMELRSVTAGRAFWGTEFYGWEPVPDQLLPELIRKIRERKGLPPEPPKAEDFLGP</sequence>
<protein>
    <recommendedName>
        <fullName evidence="1">Elongation factor 2</fullName>
        <shortName evidence="1">EF-2</shortName>
    </recommendedName>
</protein>
<dbReference type="EMBL" id="CP000816">
    <property type="protein sequence ID" value="ABU82559.1"/>
    <property type="molecule type" value="Genomic_DNA"/>
</dbReference>
<dbReference type="RefSeq" id="WP_012123523.1">
    <property type="nucleotide sequence ID" value="NC_009776.1"/>
</dbReference>
<dbReference type="SMR" id="A8ACA7"/>
<dbReference type="STRING" id="453591.Igni_1383"/>
<dbReference type="GeneID" id="5562112"/>
<dbReference type="KEGG" id="iho:Igni_1383"/>
<dbReference type="eggNOG" id="arCOG01559">
    <property type="taxonomic scope" value="Archaea"/>
</dbReference>
<dbReference type="HOGENOM" id="CLU_002794_11_1_2"/>
<dbReference type="OrthoDB" id="6290at2157"/>
<dbReference type="PhylomeDB" id="A8ACA7"/>
<dbReference type="Proteomes" id="UP000000262">
    <property type="component" value="Chromosome"/>
</dbReference>
<dbReference type="GO" id="GO:0005829">
    <property type="term" value="C:cytosol"/>
    <property type="evidence" value="ECO:0007669"/>
    <property type="project" value="TreeGrafter"/>
</dbReference>
<dbReference type="GO" id="GO:1990904">
    <property type="term" value="C:ribonucleoprotein complex"/>
    <property type="evidence" value="ECO:0007669"/>
    <property type="project" value="TreeGrafter"/>
</dbReference>
<dbReference type="GO" id="GO:0005525">
    <property type="term" value="F:GTP binding"/>
    <property type="evidence" value="ECO:0007669"/>
    <property type="project" value="UniProtKB-UniRule"/>
</dbReference>
<dbReference type="GO" id="GO:0003924">
    <property type="term" value="F:GTPase activity"/>
    <property type="evidence" value="ECO:0007669"/>
    <property type="project" value="InterPro"/>
</dbReference>
<dbReference type="GO" id="GO:0003746">
    <property type="term" value="F:translation elongation factor activity"/>
    <property type="evidence" value="ECO:0007669"/>
    <property type="project" value="UniProtKB-UniRule"/>
</dbReference>
<dbReference type="CDD" id="cd01681">
    <property type="entry name" value="aeEF2_snRNP_like_IV"/>
    <property type="match status" value="1"/>
</dbReference>
<dbReference type="CDD" id="cd01885">
    <property type="entry name" value="EF2"/>
    <property type="match status" value="1"/>
</dbReference>
<dbReference type="CDD" id="cd16268">
    <property type="entry name" value="EF2_II"/>
    <property type="match status" value="1"/>
</dbReference>
<dbReference type="CDD" id="cd16261">
    <property type="entry name" value="EF2_snRNP_III"/>
    <property type="match status" value="1"/>
</dbReference>
<dbReference type="CDD" id="cd01514">
    <property type="entry name" value="Elongation_Factor_C"/>
    <property type="match status" value="1"/>
</dbReference>
<dbReference type="FunFam" id="3.30.230.10:FF:000009">
    <property type="entry name" value="116 kDa U5 small nuclear ribonucleoprotein component"/>
    <property type="match status" value="1"/>
</dbReference>
<dbReference type="FunFam" id="3.30.70.870:FF:000002">
    <property type="entry name" value="Translation elongation factor 2"/>
    <property type="match status" value="1"/>
</dbReference>
<dbReference type="Gene3D" id="3.30.230.10">
    <property type="match status" value="1"/>
</dbReference>
<dbReference type="Gene3D" id="3.30.70.240">
    <property type="match status" value="1"/>
</dbReference>
<dbReference type="Gene3D" id="3.30.70.870">
    <property type="entry name" value="Elongation Factor G (Translational Gtpase), domain 3"/>
    <property type="match status" value="1"/>
</dbReference>
<dbReference type="Gene3D" id="3.40.50.300">
    <property type="entry name" value="P-loop containing nucleotide triphosphate hydrolases"/>
    <property type="match status" value="1"/>
</dbReference>
<dbReference type="Gene3D" id="2.40.30.10">
    <property type="entry name" value="Translation factors"/>
    <property type="match status" value="1"/>
</dbReference>
<dbReference type="HAMAP" id="MF_00054_A">
    <property type="entry name" value="EF_G_EF_2_A"/>
    <property type="match status" value="1"/>
</dbReference>
<dbReference type="InterPro" id="IPR041095">
    <property type="entry name" value="EFG_II"/>
</dbReference>
<dbReference type="InterPro" id="IPR035647">
    <property type="entry name" value="EFG_III/V"/>
</dbReference>
<dbReference type="InterPro" id="IPR000640">
    <property type="entry name" value="EFG_V-like"/>
</dbReference>
<dbReference type="InterPro" id="IPR004161">
    <property type="entry name" value="EFTu-like_2"/>
</dbReference>
<dbReference type="InterPro" id="IPR031157">
    <property type="entry name" value="G_TR_CS"/>
</dbReference>
<dbReference type="InterPro" id="IPR027417">
    <property type="entry name" value="P-loop_NTPase"/>
</dbReference>
<dbReference type="InterPro" id="IPR020568">
    <property type="entry name" value="Ribosomal_Su5_D2-typ_SF"/>
</dbReference>
<dbReference type="InterPro" id="IPR014721">
    <property type="entry name" value="Ribsml_uS5_D2-typ_fold_subgr"/>
</dbReference>
<dbReference type="InterPro" id="IPR005225">
    <property type="entry name" value="Small_GTP-bd"/>
</dbReference>
<dbReference type="InterPro" id="IPR000795">
    <property type="entry name" value="T_Tr_GTP-bd_dom"/>
</dbReference>
<dbReference type="InterPro" id="IPR009000">
    <property type="entry name" value="Transl_B-barrel_sf"/>
</dbReference>
<dbReference type="InterPro" id="IPR004543">
    <property type="entry name" value="Transl_elong_EFG/EF2_arc"/>
</dbReference>
<dbReference type="InterPro" id="IPR005517">
    <property type="entry name" value="Transl_elong_EFG/EF2_IV"/>
</dbReference>
<dbReference type="NCBIfam" id="TIGR00490">
    <property type="entry name" value="aEF-2"/>
    <property type="match status" value="1"/>
</dbReference>
<dbReference type="NCBIfam" id="TIGR00231">
    <property type="entry name" value="small_GTP"/>
    <property type="match status" value="1"/>
</dbReference>
<dbReference type="PANTHER" id="PTHR42908:SF3">
    <property type="entry name" value="ELONGATION FACTOR-LIKE GTPASE 1"/>
    <property type="match status" value="1"/>
</dbReference>
<dbReference type="PANTHER" id="PTHR42908">
    <property type="entry name" value="TRANSLATION ELONGATION FACTOR-RELATED"/>
    <property type="match status" value="1"/>
</dbReference>
<dbReference type="Pfam" id="PF00679">
    <property type="entry name" value="EFG_C"/>
    <property type="match status" value="1"/>
</dbReference>
<dbReference type="Pfam" id="PF14492">
    <property type="entry name" value="EFG_III"/>
    <property type="match status" value="1"/>
</dbReference>
<dbReference type="Pfam" id="PF03764">
    <property type="entry name" value="EFG_IV"/>
    <property type="match status" value="1"/>
</dbReference>
<dbReference type="Pfam" id="PF00009">
    <property type="entry name" value="GTP_EFTU"/>
    <property type="match status" value="1"/>
</dbReference>
<dbReference type="Pfam" id="PF03144">
    <property type="entry name" value="GTP_EFTU_D2"/>
    <property type="match status" value="1"/>
</dbReference>
<dbReference type="PRINTS" id="PR00315">
    <property type="entry name" value="ELONGATNFCT"/>
</dbReference>
<dbReference type="SMART" id="SM00838">
    <property type="entry name" value="EFG_C"/>
    <property type="match status" value="1"/>
</dbReference>
<dbReference type="SMART" id="SM00889">
    <property type="entry name" value="EFG_IV"/>
    <property type="match status" value="1"/>
</dbReference>
<dbReference type="SUPFAM" id="SSF54980">
    <property type="entry name" value="EF-G C-terminal domain-like"/>
    <property type="match status" value="2"/>
</dbReference>
<dbReference type="SUPFAM" id="SSF52540">
    <property type="entry name" value="P-loop containing nucleoside triphosphate hydrolases"/>
    <property type="match status" value="1"/>
</dbReference>
<dbReference type="SUPFAM" id="SSF54211">
    <property type="entry name" value="Ribosomal protein S5 domain 2-like"/>
    <property type="match status" value="1"/>
</dbReference>
<dbReference type="SUPFAM" id="SSF50447">
    <property type="entry name" value="Translation proteins"/>
    <property type="match status" value="1"/>
</dbReference>
<dbReference type="PROSITE" id="PS00301">
    <property type="entry name" value="G_TR_1"/>
    <property type="match status" value="1"/>
</dbReference>
<dbReference type="PROSITE" id="PS51722">
    <property type="entry name" value="G_TR_2"/>
    <property type="match status" value="1"/>
</dbReference>
<gene>
    <name evidence="1" type="primary">fusA</name>
    <name type="ordered locus">Igni_1383</name>
</gene>